<accession>Q5R5W9</accession>
<dbReference type="EMBL" id="CR860733">
    <property type="protein sequence ID" value="CAH92847.1"/>
    <property type="molecule type" value="mRNA"/>
</dbReference>
<dbReference type="RefSeq" id="NP_001126663.1">
    <property type="nucleotide sequence ID" value="NM_001133191.1"/>
</dbReference>
<dbReference type="SMR" id="Q5R5W9"/>
<dbReference type="FunCoup" id="Q5R5W9">
    <property type="interactions" value="2566"/>
</dbReference>
<dbReference type="STRING" id="9601.ENSPPYP00000017167"/>
<dbReference type="GeneID" id="100173663"/>
<dbReference type="KEGG" id="pon:100173663"/>
<dbReference type="CTD" id="612640"/>
<dbReference type="eggNOG" id="ENOG502QW2U">
    <property type="taxonomic scope" value="Eukaryota"/>
</dbReference>
<dbReference type="InParanoid" id="Q5R5W9"/>
<dbReference type="OrthoDB" id="418142at2759"/>
<dbReference type="Proteomes" id="UP000001595">
    <property type="component" value="Unplaced"/>
</dbReference>
<dbReference type="InterPro" id="IPR024131">
    <property type="entry name" value="UPF0489"/>
</dbReference>
<dbReference type="PANTHER" id="PTHR13225">
    <property type="entry name" value="MISEXPRESSION SUPPRESSOR OF RAS 6"/>
    <property type="match status" value="1"/>
</dbReference>
<dbReference type="PANTHER" id="PTHR13225:SF3">
    <property type="entry name" value="UPF0489 PROTEIN C5ORF22"/>
    <property type="match status" value="1"/>
</dbReference>
<dbReference type="Pfam" id="PF12640">
    <property type="entry name" value="UPF0489"/>
    <property type="match status" value="1"/>
</dbReference>
<protein>
    <recommendedName>
        <fullName>UPF0489 protein C5orf22 homolog</fullName>
    </recommendedName>
</protein>
<feature type="chain" id="PRO_0000305004" description="UPF0489 protein C5orf22 homolog">
    <location>
        <begin position="1"/>
        <end position="442"/>
    </location>
</feature>
<feature type="region of interest" description="Disordered" evidence="1">
    <location>
        <begin position="175"/>
        <end position="208"/>
    </location>
</feature>
<feature type="compositionally biased region" description="Polar residues" evidence="1">
    <location>
        <begin position="189"/>
        <end position="200"/>
    </location>
</feature>
<comment type="similarity">
    <text evidence="2">Belongs to the UPF0489 family.</text>
</comment>
<proteinExistence type="evidence at transcript level"/>
<name>CE022_PONAB</name>
<evidence type="ECO:0000256" key="1">
    <source>
        <dbReference type="SAM" id="MobiDB-lite"/>
    </source>
</evidence>
<evidence type="ECO:0000305" key="2"/>
<sequence length="442" mass="50000">MSDSAGGRAGLRRYPKLPVWVVEDHQEVLPFIYRAIGSKHLPASNISFLHFDSHPDLLIPVNMPADTVFDKETLFGELSIENWIMPAVYAGHFSHVIWFHPAWAQQIREGRHHFLVGKDTSTTTIRVTSTDHYFLSDGLYVPEDQLENQKPLQLDVIMVKPYKLCNNQEENDAVSSAKKPKLALEDSRNTASTNCDSSSEGLEKDTATQRSDQTCLEASCSCSSENQECQTAASTGEILETLKKGKAFVLDIDLDFFSVKNPFKEMFTQEEYKILQELYQFKKPGTNLTEEDLVDIVDTRIHQLEDLEATFADLCDGDDEETVQRWASNPGMESLVPLVQSLKKRMEVPDYEMVHQAGLTCDYSELPHHISTEQEIEYLIQSVHYLLKNLPNPTLVTIARSSLDDYCPSDQVDTIQEKVLNMLRALYGNLDLQVYAAESPPS</sequence>
<keyword id="KW-1185">Reference proteome</keyword>
<reference key="1">
    <citation type="submission" date="2004-11" db="EMBL/GenBank/DDBJ databases">
        <authorList>
            <consortium name="The German cDNA consortium"/>
        </authorList>
    </citation>
    <scope>NUCLEOTIDE SEQUENCE [LARGE SCALE MRNA]</scope>
    <source>
        <tissue>Brain cortex</tissue>
    </source>
</reference>
<organism>
    <name type="scientific">Pongo abelii</name>
    <name type="common">Sumatran orangutan</name>
    <name type="synonym">Pongo pygmaeus abelii</name>
    <dbReference type="NCBI Taxonomy" id="9601"/>
    <lineage>
        <taxon>Eukaryota</taxon>
        <taxon>Metazoa</taxon>
        <taxon>Chordata</taxon>
        <taxon>Craniata</taxon>
        <taxon>Vertebrata</taxon>
        <taxon>Euteleostomi</taxon>
        <taxon>Mammalia</taxon>
        <taxon>Eutheria</taxon>
        <taxon>Euarchontoglires</taxon>
        <taxon>Primates</taxon>
        <taxon>Haplorrhini</taxon>
        <taxon>Catarrhini</taxon>
        <taxon>Hominidae</taxon>
        <taxon>Pongo</taxon>
    </lineage>
</organism>